<gene>
    <name evidence="1" type="primary">alaS</name>
    <name type="ordered locus">LSL_1111</name>
</gene>
<sequence>MKELSSAQIRQMYLDFFKSKGHDVMKSAPLIPHDDPTLLWINSGVATMKKYFDGSVVPKNHRITSSQKSIRTNDIENVGHTARHHTLFEMLGNFSVGDYFKKEAITWAWELLTSPEWFDMDKEKLYITVYPEDKDAKKYWEEVGVDPSHIYEAEDNFWDIGEGPSGPDSEIFFDRGQEMNNLPEDDPESYPGGENERYLEIWNIVFSEFNHKPDGTYEPLPHKNIDTGMGLERVVSVFQHARTNFETDLFLPIIEKTAELSAGKKYGENAEADVSFKVIADHARAVTFAIGDGALPSNEGRGYVIRRLIRRAVMHGQKLGIDEAFLYKLVPVVGKIMESAYPEVLEQAEFIEKVIKMEEDRFNDTLKDGMQLLDSLIAETKENGGKELPGKPVFKLYDTYGFPLELTKEYANDEGLDVDEEGFNEEMEQQKARARAARSDAKSMGVQNGLLTDITTSSEYVGYHELKANGVLKDIIIDNELVDTVPADSRAQVIFDKTPFYAEMGGQVADKGVIKNQAGEVVAEVEDVQHAPNGQNMHTIHALKEMTRENTYSLEVDVAFHNKVKKNHTATHLLDQALRDVLGSHTHQAGSLVEPTYLRFDFTNLGSVTAEDLKKIEDIVNAKIWENIQVETVVTDKESAEKMGAIALFGDKYGDTVRVVKVGDYSMEFCGGTHVANTNEIGLFKIVSESGVGAGVRRIEAVTSEEAFEFLEERNQLLRQSADELKIVQIKEVPRKIEQLQEQVKLLEQQKQALEDKFASQQAGDIFKNIKDINGKTLIAGQVNVSGMSQLRQLADQWKEKQLSDVLVLATATADGKVNLITAISSDAVKEGYKAGDLIKAIAPKVGGGGGGRPDLAQAGGKKPEGIQEALKAAEDWLNK</sequence>
<reference key="1">
    <citation type="journal article" date="2006" name="Proc. Natl. Acad. Sci. U.S.A.">
        <title>Multireplicon genome architecture of Lactobacillus salivarius.</title>
        <authorList>
            <person name="Claesson M.J."/>
            <person name="Li Y."/>
            <person name="Leahy S."/>
            <person name="Canchaya C."/>
            <person name="van Pijkeren J.P."/>
            <person name="Cerdeno-Tarraga A.M."/>
            <person name="Parkhill J."/>
            <person name="Flynn S."/>
            <person name="O'Sullivan G.C."/>
            <person name="Collins J.K."/>
            <person name="Higgins D."/>
            <person name="Shanahan F."/>
            <person name="Fitzgerald G.F."/>
            <person name="van Sinderen D."/>
            <person name="O'Toole P.W."/>
        </authorList>
    </citation>
    <scope>NUCLEOTIDE SEQUENCE [LARGE SCALE GENOMIC DNA]</scope>
    <source>
        <strain>UCC118</strain>
    </source>
</reference>
<evidence type="ECO:0000255" key="1">
    <source>
        <dbReference type="HAMAP-Rule" id="MF_00036"/>
    </source>
</evidence>
<proteinExistence type="inferred from homology"/>
<feature type="chain" id="PRO_0000347650" description="Alanine--tRNA ligase">
    <location>
        <begin position="1"/>
        <end position="880"/>
    </location>
</feature>
<feature type="binding site" evidence="1">
    <location>
        <position position="568"/>
    </location>
    <ligand>
        <name>Zn(2+)</name>
        <dbReference type="ChEBI" id="CHEBI:29105"/>
    </ligand>
</feature>
<feature type="binding site" evidence="1">
    <location>
        <position position="572"/>
    </location>
    <ligand>
        <name>Zn(2+)</name>
        <dbReference type="ChEBI" id="CHEBI:29105"/>
    </ligand>
</feature>
<feature type="binding site" evidence="1">
    <location>
        <position position="670"/>
    </location>
    <ligand>
        <name>Zn(2+)</name>
        <dbReference type="ChEBI" id="CHEBI:29105"/>
    </ligand>
</feature>
<feature type="binding site" evidence="1">
    <location>
        <position position="674"/>
    </location>
    <ligand>
        <name>Zn(2+)</name>
        <dbReference type="ChEBI" id="CHEBI:29105"/>
    </ligand>
</feature>
<protein>
    <recommendedName>
        <fullName evidence="1">Alanine--tRNA ligase</fullName>
        <ecNumber evidence="1">6.1.1.7</ecNumber>
    </recommendedName>
    <alternativeName>
        <fullName evidence="1">Alanyl-tRNA synthetase</fullName>
        <shortName evidence="1">AlaRS</shortName>
    </alternativeName>
</protein>
<dbReference type="EC" id="6.1.1.7" evidence="1"/>
<dbReference type="EMBL" id="CP000233">
    <property type="protein sequence ID" value="ABD99919.1"/>
    <property type="molecule type" value="Genomic_DNA"/>
</dbReference>
<dbReference type="RefSeq" id="WP_011476171.1">
    <property type="nucleotide sequence ID" value="NC_007929.1"/>
</dbReference>
<dbReference type="RefSeq" id="YP_536002.1">
    <property type="nucleotide sequence ID" value="NC_007929.1"/>
</dbReference>
<dbReference type="SMR" id="Q1WT32"/>
<dbReference type="STRING" id="362948.LSL_1111"/>
<dbReference type="KEGG" id="lsl:LSL_1111"/>
<dbReference type="PATRIC" id="fig|362948.14.peg.1183"/>
<dbReference type="HOGENOM" id="CLU_004485_1_1_9"/>
<dbReference type="OrthoDB" id="9803884at2"/>
<dbReference type="Proteomes" id="UP000006559">
    <property type="component" value="Chromosome"/>
</dbReference>
<dbReference type="GO" id="GO:0005829">
    <property type="term" value="C:cytosol"/>
    <property type="evidence" value="ECO:0007669"/>
    <property type="project" value="TreeGrafter"/>
</dbReference>
<dbReference type="GO" id="GO:0004813">
    <property type="term" value="F:alanine-tRNA ligase activity"/>
    <property type="evidence" value="ECO:0007669"/>
    <property type="project" value="UniProtKB-UniRule"/>
</dbReference>
<dbReference type="GO" id="GO:0002161">
    <property type="term" value="F:aminoacyl-tRNA deacylase activity"/>
    <property type="evidence" value="ECO:0007669"/>
    <property type="project" value="TreeGrafter"/>
</dbReference>
<dbReference type="GO" id="GO:0005524">
    <property type="term" value="F:ATP binding"/>
    <property type="evidence" value="ECO:0007669"/>
    <property type="project" value="UniProtKB-UniRule"/>
</dbReference>
<dbReference type="GO" id="GO:0140096">
    <property type="term" value="F:catalytic activity, acting on a protein"/>
    <property type="evidence" value="ECO:0007669"/>
    <property type="project" value="UniProtKB-ARBA"/>
</dbReference>
<dbReference type="GO" id="GO:0016740">
    <property type="term" value="F:transferase activity"/>
    <property type="evidence" value="ECO:0007669"/>
    <property type="project" value="UniProtKB-ARBA"/>
</dbReference>
<dbReference type="GO" id="GO:0000049">
    <property type="term" value="F:tRNA binding"/>
    <property type="evidence" value="ECO:0007669"/>
    <property type="project" value="UniProtKB-KW"/>
</dbReference>
<dbReference type="GO" id="GO:0008270">
    <property type="term" value="F:zinc ion binding"/>
    <property type="evidence" value="ECO:0007669"/>
    <property type="project" value="UniProtKB-UniRule"/>
</dbReference>
<dbReference type="GO" id="GO:0006419">
    <property type="term" value="P:alanyl-tRNA aminoacylation"/>
    <property type="evidence" value="ECO:0007669"/>
    <property type="project" value="UniProtKB-UniRule"/>
</dbReference>
<dbReference type="CDD" id="cd00673">
    <property type="entry name" value="AlaRS_core"/>
    <property type="match status" value="1"/>
</dbReference>
<dbReference type="FunFam" id="3.10.310.40:FF:000001">
    <property type="entry name" value="Alanine--tRNA ligase"/>
    <property type="match status" value="1"/>
</dbReference>
<dbReference type="FunFam" id="3.30.54.20:FF:000001">
    <property type="entry name" value="Alanine--tRNA ligase"/>
    <property type="match status" value="1"/>
</dbReference>
<dbReference type="FunFam" id="3.30.930.10:FF:000046">
    <property type="entry name" value="Alanine--tRNA ligase"/>
    <property type="match status" value="1"/>
</dbReference>
<dbReference type="FunFam" id="3.30.980.10:FF:000004">
    <property type="entry name" value="Alanine--tRNA ligase, cytoplasmic"/>
    <property type="match status" value="1"/>
</dbReference>
<dbReference type="Gene3D" id="2.40.30.130">
    <property type="match status" value="1"/>
</dbReference>
<dbReference type="Gene3D" id="3.10.310.40">
    <property type="match status" value="1"/>
</dbReference>
<dbReference type="Gene3D" id="3.30.54.20">
    <property type="match status" value="1"/>
</dbReference>
<dbReference type="Gene3D" id="6.10.250.550">
    <property type="match status" value="1"/>
</dbReference>
<dbReference type="Gene3D" id="3.30.930.10">
    <property type="entry name" value="Bira Bifunctional Protein, Domain 2"/>
    <property type="match status" value="1"/>
</dbReference>
<dbReference type="Gene3D" id="3.30.980.10">
    <property type="entry name" value="Threonyl-trna Synthetase, Chain A, domain 2"/>
    <property type="match status" value="1"/>
</dbReference>
<dbReference type="HAMAP" id="MF_00036_B">
    <property type="entry name" value="Ala_tRNA_synth_B"/>
    <property type="match status" value="1"/>
</dbReference>
<dbReference type="InterPro" id="IPR045864">
    <property type="entry name" value="aa-tRNA-synth_II/BPL/LPL"/>
</dbReference>
<dbReference type="InterPro" id="IPR002318">
    <property type="entry name" value="Ala-tRNA-lgiase_IIc"/>
</dbReference>
<dbReference type="InterPro" id="IPR018162">
    <property type="entry name" value="Ala-tRNA-ligase_IIc_anticod-bd"/>
</dbReference>
<dbReference type="InterPro" id="IPR018165">
    <property type="entry name" value="Ala-tRNA-synth_IIc_core"/>
</dbReference>
<dbReference type="InterPro" id="IPR018164">
    <property type="entry name" value="Ala-tRNA-synth_IIc_N"/>
</dbReference>
<dbReference type="InterPro" id="IPR050058">
    <property type="entry name" value="Ala-tRNA_ligase"/>
</dbReference>
<dbReference type="InterPro" id="IPR023033">
    <property type="entry name" value="Ala_tRNA_ligase_euk/bac"/>
</dbReference>
<dbReference type="InterPro" id="IPR003156">
    <property type="entry name" value="DHHA1_dom"/>
</dbReference>
<dbReference type="InterPro" id="IPR018163">
    <property type="entry name" value="Thr/Ala-tRNA-synth_IIc_edit"/>
</dbReference>
<dbReference type="InterPro" id="IPR009000">
    <property type="entry name" value="Transl_B-barrel_sf"/>
</dbReference>
<dbReference type="InterPro" id="IPR012947">
    <property type="entry name" value="tRNA_SAD"/>
</dbReference>
<dbReference type="NCBIfam" id="TIGR00344">
    <property type="entry name" value="alaS"/>
    <property type="match status" value="1"/>
</dbReference>
<dbReference type="PANTHER" id="PTHR11777:SF9">
    <property type="entry name" value="ALANINE--TRNA LIGASE, CYTOPLASMIC"/>
    <property type="match status" value="1"/>
</dbReference>
<dbReference type="PANTHER" id="PTHR11777">
    <property type="entry name" value="ALANYL-TRNA SYNTHETASE"/>
    <property type="match status" value="1"/>
</dbReference>
<dbReference type="Pfam" id="PF02272">
    <property type="entry name" value="DHHA1"/>
    <property type="match status" value="1"/>
</dbReference>
<dbReference type="Pfam" id="PF01411">
    <property type="entry name" value="tRNA-synt_2c"/>
    <property type="match status" value="1"/>
</dbReference>
<dbReference type="Pfam" id="PF07973">
    <property type="entry name" value="tRNA_SAD"/>
    <property type="match status" value="1"/>
</dbReference>
<dbReference type="PRINTS" id="PR00980">
    <property type="entry name" value="TRNASYNTHALA"/>
</dbReference>
<dbReference type="SMART" id="SM00863">
    <property type="entry name" value="tRNA_SAD"/>
    <property type="match status" value="1"/>
</dbReference>
<dbReference type="SUPFAM" id="SSF55681">
    <property type="entry name" value="Class II aaRS and biotin synthetases"/>
    <property type="match status" value="1"/>
</dbReference>
<dbReference type="SUPFAM" id="SSF101353">
    <property type="entry name" value="Putative anticodon-binding domain of alanyl-tRNA synthetase (AlaRS)"/>
    <property type="match status" value="1"/>
</dbReference>
<dbReference type="SUPFAM" id="SSF55186">
    <property type="entry name" value="ThrRS/AlaRS common domain"/>
    <property type="match status" value="1"/>
</dbReference>
<dbReference type="SUPFAM" id="SSF50447">
    <property type="entry name" value="Translation proteins"/>
    <property type="match status" value="1"/>
</dbReference>
<dbReference type="PROSITE" id="PS50860">
    <property type="entry name" value="AA_TRNA_LIGASE_II_ALA"/>
    <property type="match status" value="1"/>
</dbReference>
<comment type="function">
    <text evidence="1">Catalyzes the attachment of alanine to tRNA(Ala) in a two-step reaction: alanine is first activated by ATP to form Ala-AMP and then transferred to the acceptor end of tRNA(Ala). Also edits incorrectly charged Ser-tRNA(Ala) and Gly-tRNA(Ala) via its editing domain.</text>
</comment>
<comment type="catalytic activity">
    <reaction evidence="1">
        <text>tRNA(Ala) + L-alanine + ATP = L-alanyl-tRNA(Ala) + AMP + diphosphate</text>
        <dbReference type="Rhea" id="RHEA:12540"/>
        <dbReference type="Rhea" id="RHEA-COMP:9657"/>
        <dbReference type="Rhea" id="RHEA-COMP:9923"/>
        <dbReference type="ChEBI" id="CHEBI:30616"/>
        <dbReference type="ChEBI" id="CHEBI:33019"/>
        <dbReference type="ChEBI" id="CHEBI:57972"/>
        <dbReference type="ChEBI" id="CHEBI:78442"/>
        <dbReference type="ChEBI" id="CHEBI:78497"/>
        <dbReference type="ChEBI" id="CHEBI:456215"/>
        <dbReference type="EC" id="6.1.1.7"/>
    </reaction>
</comment>
<comment type="cofactor">
    <cofactor evidence="1">
        <name>Zn(2+)</name>
        <dbReference type="ChEBI" id="CHEBI:29105"/>
    </cofactor>
    <text evidence="1">Binds 1 zinc ion per subunit.</text>
</comment>
<comment type="subcellular location">
    <subcellularLocation>
        <location evidence="1">Cytoplasm</location>
    </subcellularLocation>
</comment>
<comment type="domain">
    <text evidence="1">Consists of three domains; the N-terminal catalytic domain, the editing domain and the C-terminal C-Ala domain. The editing domain removes incorrectly charged amino acids, while the C-Ala domain, along with tRNA(Ala), serves as a bridge to cooperatively bring together the editing and aminoacylation centers thus stimulating deacylation of misacylated tRNAs.</text>
</comment>
<comment type="similarity">
    <text evidence="1">Belongs to the class-II aminoacyl-tRNA synthetase family.</text>
</comment>
<accession>Q1WT32</accession>
<organism>
    <name type="scientific">Ligilactobacillus salivarius (strain UCC118)</name>
    <name type="common">Lactobacillus salivarius</name>
    <dbReference type="NCBI Taxonomy" id="362948"/>
    <lineage>
        <taxon>Bacteria</taxon>
        <taxon>Bacillati</taxon>
        <taxon>Bacillota</taxon>
        <taxon>Bacilli</taxon>
        <taxon>Lactobacillales</taxon>
        <taxon>Lactobacillaceae</taxon>
        <taxon>Ligilactobacillus</taxon>
    </lineage>
</organism>
<keyword id="KW-0030">Aminoacyl-tRNA synthetase</keyword>
<keyword id="KW-0067">ATP-binding</keyword>
<keyword id="KW-0963">Cytoplasm</keyword>
<keyword id="KW-0436">Ligase</keyword>
<keyword id="KW-0479">Metal-binding</keyword>
<keyword id="KW-0547">Nucleotide-binding</keyword>
<keyword id="KW-0648">Protein biosynthesis</keyword>
<keyword id="KW-1185">Reference proteome</keyword>
<keyword id="KW-0694">RNA-binding</keyword>
<keyword id="KW-0820">tRNA-binding</keyword>
<keyword id="KW-0862">Zinc</keyword>
<name>SYA_LIGS1</name>